<organismHost>
    <name type="scientific">Mus musculus</name>
    <name type="common">Mouse</name>
    <dbReference type="NCBI Taxonomy" id="10090"/>
</organismHost>
<name>ENV_RSFFV</name>
<feature type="signal peptide" evidence="2">
    <location>
        <begin position="1"/>
        <end position="32"/>
    </location>
</feature>
<feature type="chain" id="PRO_0000040795" description="Glycoprotein 55">
    <location>
        <begin position="33"/>
        <end position="408"/>
    </location>
</feature>
<feature type="topological domain" description="Virion surface" evidence="2">
    <location>
        <begin position="33"/>
        <end position="385"/>
    </location>
</feature>
<feature type="transmembrane region" description="Helical" evidence="2">
    <location>
        <begin position="386"/>
        <end position="406"/>
    </location>
</feature>
<feature type="topological domain" description="Intravirion" evidence="2">
    <location>
        <begin position="407"/>
        <end position="408"/>
    </location>
</feature>
<feature type="region of interest" description="Disordered" evidence="3">
    <location>
        <begin position="256"/>
        <end position="281"/>
    </location>
</feature>
<feature type="coiled-coil region" evidence="2">
    <location>
        <begin position="335"/>
        <end position="371"/>
    </location>
</feature>
<feature type="glycosylation site" description="N-linked (GlcNAc...) asparagine; by host" evidence="2">
    <location>
        <position position="43"/>
    </location>
</feature>
<feature type="glycosylation site" description="N-linked (GlcNAc...) asparagine; by host" evidence="2">
    <location>
        <position position="58"/>
    </location>
</feature>
<feature type="glycosylation site" description="N-linked (GlcNAc...) asparagine; by host" evidence="2">
    <location>
        <position position="297"/>
    </location>
</feature>
<feature type="glycosylation site" description="N-linked (GlcNAc...) asparagine; by host" evidence="2">
    <location>
        <position position="329"/>
    </location>
</feature>
<feature type="glycosylation site" description="N-linked (GlcNAc...) asparagine; by host" evidence="2">
    <location>
        <position position="378"/>
    </location>
</feature>
<dbReference type="EMBL" id="K02375">
    <property type="protein sequence ID" value="AAA46505.1"/>
    <property type="molecule type" value="Genomic_RNA"/>
</dbReference>
<dbReference type="PIR" id="A03988">
    <property type="entry name" value="VCMVSR"/>
</dbReference>
<dbReference type="SMR" id="P03389"/>
<dbReference type="GlyCosmos" id="P03389">
    <property type="glycosylation" value="5 sites, No reported glycans"/>
</dbReference>
<dbReference type="GO" id="GO:0044167">
    <property type="term" value="C:host cell endoplasmic reticulum membrane"/>
    <property type="evidence" value="ECO:0007669"/>
    <property type="project" value="UniProtKB-SubCell"/>
</dbReference>
<dbReference type="GO" id="GO:0020002">
    <property type="term" value="C:host cell plasma membrane"/>
    <property type="evidence" value="ECO:0007669"/>
    <property type="project" value="UniProtKB-SubCell"/>
</dbReference>
<dbReference type="GO" id="GO:0016020">
    <property type="term" value="C:membrane"/>
    <property type="evidence" value="ECO:0007669"/>
    <property type="project" value="UniProtKB-KW"/>
</dbReference>
<dbReference type="GO" id="GO:0019031">
    <property type="term" value="C:viral envelope"/>
    <property type="evidence" value="ECO:0007669"/>
    <property type="project" value="UniProtKB-KW"/>
</dbReference>
<dbReference type="GO" id="GO:0055036">
    <property type="term" value="C:virion membrane"/>
    <property type="evidence" value="ECO:0007669"/>
    <property type="project" value="UniProtKB-SubCell"/>
</dbReference>
<dbReference type="GO" id="GO:0019064">
    <property type="term" value="P:fusion of virus membrane with host plasma membrane"/>
    <property type="evidence" value="ECO:0007669"/>
    <property type="project" value="UniProtKB-KW"/>
</dbReference>
<dbReference type="GO" id="GO:0046718">
    <property type="term" value="P:symbiont entry into host cell"/>
    <property type="evidence" value="ECO:0007669"/>
    <property type="project" value="UniProtKB-KW"/>
</dbReference>
<dbReference type="GO" id="GO:0019062">
    <property type="term" value="P:virion attachment to host cell"/>
    <property type="evidence" value="ECO:0007669"/>
    <property type="project" value="UniProtKB-KW"/>
</dbReference>
<dbReference type="Gene3D" id="1.10.287.210">
    <property type="match status" value="1"/>
</dbReference>
<dbReference type="Gene3D" id="3.90.310.10">
    <property type="entry name" value="ENV polyprotein, receptor-binding domain"/>
    <property type="match status" value="1"/>
</dbReference>
<dbReference type="InterPro" id="IPR008981">
    <property type="entry name" value="FMuLV_rcpt-bd"/>
</dbReference>
<dbReference type="InterPro" id="IPR018154">
    <property type="entry name" value="TLV/ENV_coat_polyprotein"/>
</dbReference>
<dbReference type="PANTHER" id="PTHR10424:SF72">
    <property type="entry name" value="BC035947 PROTEIN-RELATED"/>
    <property type="match status" value="1"/>
</dbReference>
<dbReference type="PANTHER" id="PTHR10424">
    <property type="entry name" value="VIRAL ENVELOPE PROTEIN"/>
    <property type="match status" value="1"/>
</dbReference>
<dbReference type="Pfam" id="PF00429">
    <property type="entry name" value="TLV_coat"/>
    <property type="match status" value="2"/>
</dbReference>
<dbReference type="SUPFAM" id="SSF49830">
    <property type="entry name" value="ENV polyprotein, receptor-binding domain"/>
    <property type="match status" value="1"/>
</dbReference>
<gene>
    <name type="primary">env</name>
</gene>
<comment type="function">
    <text>Envelope-like membrane glycoprotein.</text>
</comment>
<comment type="subcellular location">
    <subcellularLocation>
        <location>Host endoplasmic reticulum membrane</location>
        <topology>Single-pass type I membrane protein</topology>
    </subcellularLocation>
    <subcellularLocation>
        <location>Host cell membrane</location>
        <topology>Single-pass type I membrane protein</topology>
    </subcellularLocation>
    <subcellularLocation>
        <location evidence="4">Virion membrane</location>
        <topology evidence="4">Single-pass type I membrane protein</topology>
    </subcellularLocation>
    <text evidence="1">The envelope-like membrane glycoprotein gp55 is defective in its transport to the cell surface and remains associated predominantly with the rough endoplasmic reticulum (RER) membrane. It is almost not incorporated into virions. Host cell surface expression appears to be a prerequisite for its leukemogenicity (By similarity).</text>
</comment>
<comment type="miscellaneous">
    <text>Compared to other gammaretroviruses which possess 2 envelope proteins (gp70 and p15E), RSFFV gp55 corresponds to a gp70-p15E fusion protein with a deletion of a portion of p15E. It is encoded by the defective env gene of the virus.</text>
</comment>
<comment type="miscellaneous">
    <text>The Rauscher murine leukemia virus complex induces a rapid and fatal erythroleukemia in adult mice. It is the replication-defective spleen focus-forming virus (SFFV) contained in this complex that causes foci of proliferating erythroid cells in spleens of infected mice. The second component is a replication competent Rauscher murine leukemia virus (R-MuLV) that serves as a helper virus for SFFV. Spleens of infected mice also contain a third component, the Rauscher mink cell focus-inducing (R-MCF) virus.</text>
</comment>
<protein>
    <recommendedName>
        <fullName>Glycoprotein 55</fullName>
        <shortName>gp55</shortName>
    </recommendedName>
</protein>
<proteinExistence type="inferred from homology"/>
<accession>P03389</accession>
<organism>
    <name type="scientific">Rauscher spleen focus-forming virus</name>
    <name type="common">RSFFV</name>
    <dbReference type="NCBI Taxonomy" id="11821"/>
    <lineage>
        <taxon>Viruses</taxon>
        <taxon>Riboviria</taxon>
        <taxon>Pararnavirae</taxon>
        <taxon>Artverviricota</taxon>
        <taxon>Revtraviricetes</taxon>
        <taxon>Ortervirales</taxon>
        <taxon>Retroviridae</taxon>
        <taxon>Orthoretrovirinae</taxon>
        <taxon>Gammaretrovirus</taxon>
        <taxon>Spleen focus-forming virus</taxon>
    </lineage>
</organism>
<keyword id="KW-0175">Coiled coil</keyword>
<keyword id="KW-1169">Fusion of virus membrane with host cell membrane</keyword>
<keyword id="KW-1168">Fusion of virus membrane with host membrane</keyword>
<keyword id="KW-0325">Glycoprotein</keyword>
<keyword id="KW-1032">Host cell membrane</keyword>
<keyword id="KW-1038">Host endoplasmic reticulum</keyword>
<keyword id="KW-1043">Host membrane</keyword>
<keyword id="KW-0945">Host-virus interaction</keyword>
<keyword id="KW-0472">Membrane</keyword>
<keyword id="KW-0732">Signal</keyword>
<keyword id="KW-0812">Transmembrane</keyword>
<keyword id="KW-1133">Transmembrane helix</keyword>
<keyword id="KW-1161">Viral attachment to host cell</keyword>
<keyword id="KW-0261">Viral envelope protein</keyword>
<keyword id="KW-1162">Viral penetration into host cytoplasm</keyword>
<keyword id="KW-0946">Virion</keyword>
<keyword id="KW-1160">Virus entry into host cell</keyword>
<reference key="1">
    <citation type="journal article" date="1984" name="J. Virol.">
        <title>Molecular cloning of biologically active Rauscher spleen focus-forming virus and the sequences of its env gene and long terminal repeat.</title>
        <authorList>
            <person name="Bestwick R.K."/>
            <person name="Boswell B.A."/>
            <person name="Kabat D."/>
        </authorList>
    </citation>
    <scope>NUCLEOTIDE SEQUENCE [GENOMIC RNA]</scope>
</reference>
<sequence>MEGPAFSKPLKDKINPWGPLIILGILIRAGVSVQHDSPHQVFNVTWRVTNLMTGQTANATSLLGTMTDAFPKLYFDLCDLIGDDWDETGLGCRTPGGRKRARTFDFYVCPGHTVPTGCGGPREGYCGKWGCETTGQAYWKPSSSWDLISLKRGNTPRNQGPCYDSSAVSSDIKGATPGGRCNPLVLEFTDAGKKASWDGPKVWGLRLYRSTGTDPVTRFSLTRQVLNIGPRVPIGPNPVITDQLPPSRPVQIMLPRPPQPPPPGAASIVPETAPPSQQPGTGDRLLNLVDGAYQALNLTNPDKTQDCWLCLVSGPPYYEGVAVLGTYYNHTSALKEECCFYADHTGLVRDSMAKLRERLTQRQKLFESSQGWFEELFNRSTWFTTLIFTIIGPLIILLLILLFWTLHS</sequence>
<evidence type="ECO:0000250" key="1"/>
<evidence type="ECO:0000255" key="2"/>
<evidence type="ECO:0000256" key="3">
    <source>
        <dbReference type="SAM" id="MobiDB-lite"/>
    </source>
</evidence>
<evidence type="ECO:0000305" key="4"/>